<organism>
    <name type="scientific">Yersinia pestis</name>
    <dbReference type="NCBI Taxonomy" id="632"/>
    <lineage>
        <taxon>Bacteria</taxon>
        <taxon>Pseudomonadati</taxon>
        <taxon>Pseudomonadota</taxon>
        <taxon>Gammaproteobacteria</taxon>
        <taxon>Enterobacterales</taxon>
        <taxon>Yersiniaceae</taxon>
        <taxon>Yersinia</taxon>
    </lineage>
</organism>
<gene>
    <name evidence="1" type="primary">slmA</name>
    <name type="ordered locus">YPO0046</name>
    <name type="ordered locus">y0095</name>
    <name type="ordered locus">YP_0047</name>
</gene>
<reference key="1">
    <citation type="journal article" date="2001" name="Nature">
        <title>Genome sequence of Yersinia pestis, the causative agent of plague.</title>
        <authorList>
            <person name="Parkhill J."/>
            <person name="Wren B.W."/>
            <person name="Thomson N.R."/>
            <person name="Titball R.W."/>
            <person name="Holden M.T.G."/>
            <person name="Prentice M.B."/>
            <person name="Sebaihia M."/>
            <person name="James K.D."/>
            <person name="Churcher C.M."/>
            <person name="Mungall K.L."/>
            <person name="Baker S."/>
            <person name="Basham D."/>
            <person name="Bentley S.D."/>
            <person name="Brooks K."/>
            <person name="Cerdeno-Tarraga A.-M."/>
            <person name="Chillingworth T."/>
            <person name="Cronin A."/>
            <person name="Davies R.M."/>
            <person name="Davis P."/>
            <person name="Dougan G."/>
            <person name="Feltwell T."/>
            <person name="Hamlin N."/>
            <person name="Holroyd S."/>
            <person name="Jagels K."/>
            <person name="Karlyshev A.V."/>
            <person name="Leather S."/>
            <person name="Moule S."/>
            <person name="Oyston P.C.F."/>
            <person name="Quail M.A."/>
            <person name="Rutherford K.M."/>
            <person name="Simmonds M."/>
            <person name="Skelton J."/>
            <person name="Stevens K."/>
            <person name="Whitehead S."/>
            <person name="Barrell B.G."/>
        </authorList>
    </citation>
    <scope>NUCLEOTIDE SEQUENCE [LARGE SCALE GENOMIC DNA]</scope>
    <source>
        <strain>CO-92 / Biovar Orientalis</strain>
    </source>
</reference>
<reference key="2">
    <citation type="journal article" date="2002" name="J. Bacteriol.">
        <title>Genome sequence of Yersinia pestis KIM.</title>
        <authorList>
            <person name="Deng W."/>
            <person name="Burland V."/>
            <person name="Plunkett G. III"/>
            <person name="Boutin A."/>
            <person name="Mayhew G.F."/>
            <person name="Liss P."/>
            <person name="Perna N.T."/>
            <person name="Rose D.J."/>
            <person name="Mau B."/>
            <person name="Zhou S."/>
            <person name="Schwartz D.C."/>
            <person name="Fetherston J.D."/>
            <person name="Lindler L.E."/>
            <person name="Brubaker R.R."/>
            <person name="Plano G.V."/>
            <person name="Straley S.C."/>
            <person name="McDonough K.A."/>
            <person name="Nilles M.L."/>
            <person name="Matson J.S."/>
            <person name="Blattner F.R."/>
            <person name="Perry R.D."/>
        </authorList>
    </citation>
    <scope>NUCLEOTIDE SEQUENCE [LARGE SCALE GENOMIC DNA]</scope>
    <source>
        <strain>KIM10+ / Biovar Mediaevalis</strain>
    </source>
</reference>
<reference key="3">
    <citation type="journal article" date="2004" name="DNA Res.">
        <title>Complete genome sequence of Yersinia pestis strain 91001, an isolate avirulent to humans.</title>
        <authorList>
            <person name="Song Y."/>
            <person name="Tong Z."/>
            <person name="Wang J."/>
            <person name="Wang L."/>
            <person name="Guo Z."/>
            <person name="Han Y."/>
            <person name="Zhang J."/>
            <person name="Pei D."/>
            <person name="Zhou D."/>
            <person name="Qin H."/>
            <person name="Pang X."/>
            <person name="Han Y."/>
            <person name="Zhai J."/>
            <person name="Li M."/>
            <person name="Cui B."/>
            <person name="Qi Z."/>
            <person name="Jin L."/>
            <person name="Dai R."/>
            <person name="Chen F."/>
            <person name="Li S."/>
            <person name="Ye C."/>
            <person name="Du Z."/>
            <person name="Lin W."/>
            <person name="Wang J."/>
            <person name="Yu J."/>
            <person name="Yang H."/>
            <person name="Wang J."/>
            <person name="Huang P."/>
            <person name="Yang R."/>
        </authorList>
    </citation>
    <scope>NUCLEOTIDE SEQUENCE [LARGE SCALE GENOMIC DNA]</scope>
    <source>
        <strain>91001 / Biovar Mediaevalis</strain>
    </source>
</reference>
<proteinExistence type="inferred from homology"/>
<comment type="function">
    <text evidence="1">Required for nucleoid occlusion (NO) phenomenon, which prevents Z-ring formation and cell division over the nucleoid. Acts as a DNA-associated cell division inhibitor that binds simultaneously chromosomal DNA and FtsZ, and disrupts the assembly of FtsZ polymers. SlmA-DNA-binding sequences (SBS) are dispersed on non-Ter regions of the chromosome, preventing FtsZ polymerization at these regions.</text>
</comment>
<comment type="subunit">
    <text evidence="1">Homodimer. Interacts with FtsZ.</text>
</comment>
<comment type="subcellular location">
    <subcellularLocation>
        <location evidence="1">Cytoplasm</location>
        <location evidence="1">Nucleoid</location>
    </subcellularLocation>
</comment>
<comment type="similarity">
    <text evidence="1">Belongs to the nucleoid occlusion factor SlmA family.</text>
</comment>
<sequence>MAEKENTKRNRREEILQALAQMLESSDGSQRITTAKLAANVGVSEAALYRHFPSKTRMFDSLIEFIEDSLMSRINLILQDEKETFNRLRLILLLVLGFAERNPGLTRIMTGHALMFEQDRLQGRINQLFERIEMQLRQVLREKKLRDGQGFIHDEALLATQLLAFCEGMLSRFVRSEFRYCPTQEFDSRWPLIVAQLQ</sequence>
<feature type="chain" id="PRO_0000198988" description="Nucleoid occlusion factor SlmA">
    <location>
        <begin position="1"/>
        <end position="198"/>
    </location>
</feature>
<feature type="domain" description="HTH tetR-type" evidence="1">
    <location>
        <begin position="9"/>
        <end position="70"/>
    </location>
</feature>
<feature type="DNA-binding region" description="H-T-H motif" evidence="1">
    <location>
        <begin position="33"/>
        <end position="52"/>
    </location>
</feature>
<feature type="coiled-coil region" evidence="1">
    <location>
        <begin position="119"/>
        <end position="144"/>
    </location>
</feature>
<dbReference type="EMBL" id="AL590842">
    <property type="protein sequence ID" value="CAL18736.1"/>
    <property type="molecule type" value="Genomic_DNA"/>
</dbReference>
<dbReference type="EMBL" id="AE009952">
    <property type="protein sequence ID" value="AAM83689.1"/>
    <property type="molecule type" value="Genomic_DNA"/>
</dbReference>
<dbReference type="EMBL" id="AE017042">
    <property type="protein sequence ID" value="AAS60328.1"/>
    <property type="molecule type" value="Genomic_DNA"/>
</dbReference>
<dbReference type="PIR" id="AG0006">
    <property type="entry name" value="AG0006"/>
</dbReference>
<dbReference type="RefSeq" id="WP_002208995.1">
    <property type="nucleotide sequence ID" value="NZ_WUCM01000015.1"/>
</dbReference>
<dbReference type="RefSeq" id="YP_002345142.1">
    <property type="nucleotide sequence ID" value="NC_003143.1"/>
</dbReference>
<dbReference type="SMR" id="Q8ZJP6"/>
<dbReference type="STRING" id="214092.YPO0046"/>
<dbReference type="PaxDb" id="214092-YPO0046"/>
<dbReference type="DNASU" id="1145042"/>
<dbReference type="EnsemblBacteria" id="AAS60328">
    <property type="protein sequence ID" value="AAS60328"/>
    <property type="gene ID" value="YP_0047"/>
</dbReference>
<dbReference type="GeneID" id="96663527"/>
<dbReference type="KEGG" id="ype:YPO0046"/>
<dbReference type="KEGG" id="ypk:y0095"/>
<dbReference type="KEGG" id="ypm:YP_0047"/>
<dbReference type="PATRIC" id="fig|1028802.3.peg.1072"/>
<dbReference type="eggNOG" id="COG1309">
    <property type="taxonomic scope" value="Bacteria"/>
</dbReference>
<dbReference type="HOGENOM" id="CLU_069356_5_0_6"/>
<dbReference type="OMA" id="KMYEGLI"/>
<dbReference type="OrthoDB" id="9179041at2"/>
<dbReference type="Proteomes" id="UP000000815">
    <property type="component" value="Chromosome"/>
</dbReference>
<dbReference type="Proteomes" id="UP000001019">
    <property type="component" value="Chromosome"/>
</dbReference>
<dbReference type="Proteomes" id="UP000002490">
    <property type="component" value="Chromosome"/>
</dbReference>
<dbReference type="GO" id="GO:0043590">
    <property type="term" value="C:bacterial nucleoid"/>
    <property type="evidence" value="ECO:0007669"/>
    <property type="project" value="UniProtKB-UniRule"/>
</dbReference>
<dbReference type="GO" id="GO:0005737">
    <property type="term" value="C:cytoplasm"/>
    <property type="evidence" value="ECO:0007669"/>
    <property type="project" value="UniProtKB-UniRule"/>
</dbReference>
<dbReference type="GO" id="GO:0003700">
    <property type="term" value="F:DNA-binding transcription factor activity"/>
    <property type="evidence" value="ECO:0000318"/>
    <property type="project" value="GO_Central"/>
</dbReference>
<dbReference type="GO" id="GO:0000976">
    <property type="term" value="F:transcription cis-regulatory region binding"/>
    <property type="evidence" value="ECO:0000318"/>
    <property type="project" value="GO_Central"/>
</dbReference>
<dbReference type="GO" id="GO:0051301">
    <property type="term" value="P:cell division"/>
    <property type="evidence" value="ECO:0007669"/>
    <property type="project" value="UniProtKB-KW"/>
</dbReference>
<dbReference type="GO" id="GO:0010974">
    <property type="term" value="P:negative regulation of division septum assembly"/>
    <property type="evidence" value="ECO:0007669"/>
    <property type="project" value="InterPro"/>
</dbReference>
<dbReference type="GO" id="GO:0006355">
    <property type="term" value="P:regulation of DNA-templated transcription"/>
    <property type="evidence" value="ECO:0000318"/>
    <property type="project" value="GO_Central"/>
</dbReference>
<dbReference type="FunFam" id="1.10.357.10:FF:000002">
    <property type="entry name" value="Nucleoid occlusion factor SlmA"/>
    <property type="match status" value="1"/>
</dbReference>
<dbReference type="Gene3D" id="1.10.357.10">
    <property type="entry name" value="Tetracycline Repressor, domain 2"/>
    <property type="match status" value="1"/>
</dbReference>
<dbReference type="HAMAP" id="MF_01839">
    <property type="entry name" value="NO_factor_SlmA"/>
    <property type="match status" value="1"/>
</dbReference>
<dbReference type="InterPro" id="IPR023772">
    <property type="entry name" value="DNA-bd_HTH_TetR-type_CS"/>
</dbReference>
<dbReference type="InterPro" id="IPR009057">
    <property type="entry name" value="Homeodomain-like_sf"/>
</dbReference>
<dbReference type="InterPro" id="IPR050109">
    <property type="entry name" value="HTH-type_TetR-like_transc_reg"/>
</dbReference>
<dbReference type="InterPro" id="IPR001647">
    <property type="entry name" value="HTH_TetR"/>
</dbReference>
<dbReference type="InterPro" id="IPR023769">
    <property type="entry name" value="NO_SlmA"/>
</dbReference>
<dbReference type="InterPro" id="IPR054580">
    <property type="entry name" value="SlmA-like_C"/>
</dbReference>
<dbReference type="InterPro" id="IPR036271">
    <property type="entry name" value="Tet_transcr_reg_TetR-rel_C_sf"/>
</dbReference>
<dbReference type="NCBIfam" id="NF007015">
    <property type="entry name" value="PRK09480.1"/>
    <property type="match status" value="1"/>
</dbReference>
<dbReference type="PANTHER" id="PTHR30055">
    <property type="entry name" value="HTH-TYPE TRANSCRIPTIONAL REGULATOR RUTR"/>
    <property type="match status" value="1"/>
</dbReference>
<dbReference type="PANTHER" id="PTHR30055:SF183">
    <property type="entry name" value="NUCLEOID OCCLUSION FACTOR SLMA"/>
    <property type="match status" value="1"/>
</dbReference>
<dbReference type="Pfam" id="PF22276">
    <property type="entry name" value="SlmA-like_C"/>
    <property type="match status" value="1"/>
</dbReference>
<dbReference type="Pfam" id="PF00440">
    <property type="entry name" value="TetR_N"/>
    <property type="match status" value="1"/>
</dbReference>
<dbReference type="SUPFAM" id="SSF46689">
    <property type="entry name" value="Homeodomain-like"/>
    <property type="match status" value="1"/>
</dbReference>
<dbReference type="SUPFAM" id="SSF48498">
    <property type="entry name" value="Tetracyclin repressor-like, C-terminal domain"/>
    <property type="match status" value="1"/>
</dbReference>
<dbReference type="PROSITE" id="PS01081">
    <property type="entry name" value="HTH_TETR_1"/>
    <property type="match status" value="1"/>
</dbReference>
<dbReference type="PROSITE" id="PS50977">
    <property type="entry name" value="HTH_TETR_2"/>
    <property type="match status" value="1"/>
</dbReference>
<accession>Q8ZJP6</accession>
<accession>Q0WKP6</accession>
<accession>Q74YA7</accession>
<accession>Q7CLB5</accession>
<name>SLMA_YERPE</name>
<protein>
    <recommendedName>
        <fullName evidence="1">Nucleoid occlusion factor SlmA</fullName>
    </recommendedName>
</protein>
<evidence type="ECO:0000255" key="1">
    <source>
        <dbReference type="HAMAP-Rule" id="MF_01839"/>
    </source>
</evidence>
<keyword id="KW-0131">Cell cycle</keyword>
<keyword id="KW-0132">Cell division</keyword>
<keyword id="KW-0175">Coiled coil</keyword>
<keyword id="KW-0963">Cytoplasm</keyword>
<keyword id="KW-0238">DNA-binding</keyword>
<keyword id="KW-1185">Reference proteome</keyword>